<keyword id="KW-0175">Coiled coil</keyword>
<keyword id="KW-0968">Cytoplasmic vesicle</keyword>
<keyword id="KW-0967">Endosome</keyword>
<keyword id="KW-0333">Golgi apparatus</keyword>
<keyword id="KW-1267">Proteomics identification</keyword>
<keyword id="KW-1185">Reference proteome</keyword>
<dbReference type="EMBL" id="CR456454">
    <property type="protein sequence ID" value="CAG30340.1"/>
    <property type="molecule type" value="mRNA"/>
</dbReference>
<dbReference type="EMBL" id="Z99716">
    <property type="status" value="NOT_ANNOTATED_CDS"/>
    <property type="molecule type" value="Genomic_DNA"/>
</dbReference>
<dbReference type="EMBL" id="Z82192">
    <property type="status" value="NOT_ANNOTATED_CDS"/>
    <property type="molecule type" value="Genomic_DNA"/>
</dbReference>
<dbReference type="EMBL" id="BC029776">
    <property type="protein sequence ID" value="AAH29776.1"/>
    <property type="molecule type" value="mRNA"/>
</dbReference>
<dbReference type="EMBL" id="BC104175">
    <property type="protein sequence ID" value="AAI04176.1"/>
    <property type="molecule type" value="mRNA"/>
</dbReference>
<dbReference type="EMBL" id="BC104176">
    <property type="protein sequence ID" value="AAI04177.1"/>
    <property type="molecule type" value="mRNA"/>
</dbReference>
<dbReference type="CCDS" id="CCDS33655.1"/>
<dbReference type="RefSeq" id="NP_001002034.2">
    <property type="nucleotide sequence ID" value="NM_001002034.3"/>
</dbReference>
<dbReference type="RefSeq" id="XP_005261430.1">
    <property type="nucleotide sequence ID" value="XM_005261373.3"/>
</dbReference>
<dbReference type="SMR" id="Q6ICB4"/>
<dbReference type="BioGRID" id="127287">
    <property type="interactions" value="15"/>
</dbReference>
<dbReference type="ELM" id="Q6ICB4"/>
<dbReference type="FunCoup" id="Q6ICB4">
    <property type="interactions" value="273"/>
</dbReference>
<dbReference type="IntAct" id="Q6ICB4">
    <property type="interactions" value="10"/>
</dbReference>
<dbReference type="MINT" id="Q6ICB4"/>
<dbReference type="STRING" id="9606.ENSP00000312753"/>
<dbReference type="GlyGen" id="Q6ICB4">
    <property type="glycosylation" value="1 site"/>
</dbReference>
<dbReference type="iPTMnet" id="Q6ICB4"/>
<dbReference type="PhosphoSitePlus" id="Q6ICB4"/>
<dbReference type="BioMuta" id="FAM109B"/>
<dbReference type="DMDM" id="74757717"/>
<dbReference type="jPOST" id="Q6ICB4"/>
<dbReference type="MassIVE" id="Q6ICB4"/>
<dbReference type="PaxDb" id="9606-ENSP00000312753"/>
<dbReference type="PeptideAtlas" id="Q6ICB4"/>
<dbReference type="ProteomicsDB" id="66383"/>
<dbReference type="Pumba" id="Q6ICB4"/>
<dbReference type="Antibodypedia" id="270">
    <property type="antibodies" value="36 antibodies from 10 providers"/>
</dbReference>
<dbReference type="DNASU" id="150368"/>
<dbReference type="Ensembl" id="ENST00000321753.8">
    <property type="protein sequence ID" value="ENSP00000312753.3"/>
    <property type="gene ID" value="ENSG00000177096.9"/>
</dbReference>
<dbReference type="GeneID" id="150368"/>
<dbReference type="KEGG" id="hsa:150368"/>
<dbReference type="MANE-Select" id="ENST00000321753.8">
    <property type="protein sequence ID" value="ENSP00000312753.3"/>
    <property type="RefSeq nucleotide sequence ID" value="NM_001002034.3"/>
    <property type="RefSeq protein sequence ID" value="NP_001002034.2"/>
</dbReference>
<dbReference type="UCSC" id="uc003bbz.4">
    <property type="organism name" value="human"/>
</dbReference>
<dbReference type="AGR" id="HGNC:27161"/>
<dbReference type="CTD" id="150368"/>
<dbReference type="DisGeNET" id="150368"/>
<dbReference type="GeneCards" id="PHETA2"/>
<dbReference type="HGNC" id="HGNC:27161">
    <property type="gene designation" value="PHETA2"/>
</dbReference>
<dbReference type="HPA" id="ENSG00000177096">
    <property type="expression patterns" value="Low tissue specificity"/>
</dbReference>
<dbReference type="MIM" id="614240">
    <property type="type" value="gene"/>
</dbReference>
<dbReference type="neXtProt" id="NX_Q6ICB4"/>
<dbReference type="OpenTargets" id="ENSG00000177096"/>
<dbReference type="PharmGKB" id="PA143485467"/>
<dbReference type="VEuPathDB" id="HostDB:ENSG00000177096"/>
<dbReference type="eggNOG" id="ENOG502QQ94">
    <property type="taxonomic scope" value="Eukaryota"/>
</dbReference>
<dbReference type="GeneTree" id="ENSGT00940000162686"/>
<dbReference type="HOGENOM" id="CLU_060423_0_1_1"/>
<dbReference type="InParanoid" id="Q6ICB4"/>
<dbReference type="OMA" id="PETICFS"/>
<dbReference type="OrthoDB" id="10261837at2759"/>
<dbReference type="PAN-GO" id="Q6ICB4">
    <property type="GO annotations" value="6 GO annotations based on evolutionary models"/>
</dbReference>
<dbReference type="PhylomeDB" id="Q6ICB4"/>
<dbReference type="TreeFam" id="TF326731"/>
<dbReference type="PathwayCommons" id="Q6ICB4"/>
<dbReference type="SignaLink" id="Q6ICB4"/>
<dbReference type="BioGRID-ORCS" id="150368">
    <property type="hits" value="15 hits in 1148 CRISPR screens"/>
</dbReference>
<dbReference type="GenomeRNAi" id="150368"/>
<dbReference type="Pharos" id="Q6ICB4">
    <property type="development level" value="Tbio"/>
</dbReference>
<dbReference type="PRO" id="PR:Q6ICB4"/>
<dbReference type="Proteomes" id="UP000005640">
    <property type="component" value="Chromosome 22"/>
</dbReference>
<dbReference type="RNAct" id="Q6ICB4">
    <property type="molecule type" value="protein"/>
</dbReference>
<dbReference type="Bgee" id="ENSG00000177096">
    <property type="expression patterns" value="Expressed in stromal cell of endometrium and 148 other cell types or tissues"/>
</dbReference>
<dbReference type="ExpressionAtlas" id="Q6ICB4">
    <property type="expression patterns" value="baseline and differential"/>
</dbReference>
<dbReference type="GO" id="GO:0030136">
    <property type="term" value="C:clathrin-coated vesicle"/>
    <property type="evidence" value="ECO:0000314"/>
    <property type="project" value="UniProtKB"/>
</dbReference>
<dbReference type="GO" id="GO:0005829">
    <property type="term" value="C:cytosol"/>
    <property type="evidence" value="ECO:0007669"/>
    <property type="project" value="GOC"/>
</dbReference>
<dbReference type="GO" id="GO:0005769">
    <property type="term" value="C:early endosome"/>
    <property type="evidence" value="ECO:0000314"/>
    <property type="project" value="UniProtKB"/>
</dbReference>
<dbReference type="GO" id="GO:0055037">
    <property type="term" value="C:recycling endosome"/>
    <property type="evidence" value="ECO:0000314"/>
    <property type="project" value="UniProtKB"/>
</dbReference>
<dbReference type="GO" id="GO:0005802">
    <property type="term" value="C:trans-Golgi network"/>
    <property type="evidence" value="ECO:0000314"/>
    <property type="project" value="UniProtKB"/>
</dbReference>
<dbReference type="GO" id="GO:0042803">
    <property type="term" value="F:protein homodimerization activity"/>
    <property type="evidence" value="ECO:0000353"/>
    <property type="project" value="UniProtKB"/>
</dbReference>
<dbReference type="GO" id="GO:0007032">
    <property type="term" value="P:endosome organization"/>
    <property type="evidence" value="ECO:0000315"/>
    <property type="project" value="UniProtKB"/>
</dbReference>
<dbReference type="GO" id="GO:0001881">
    <property type="term" value="P:receptor recycling"/>
    <property type="evidence" value="ECO:0000315"/>
    <property type="project" value="UniProtKB"/>
</dbReference>
<dbReference type="GO" id="GO:0042147">
    <property type="term" value="P:retrograde transport, endosome to Golgi"/>
    <property type="evidence" value="ECO:0000315"/>
    <property type="project" value="UniProtKB"/>
</dbReference>
<dbReference type="FunFam" id="2.30.29.30:FF:000292">
    <property type="entry name" value="sesquipedalian-2 isoform X2"/>
    <property type="match status" value="1"/>
</dbReference>
<dbReference type="Gene3D" id="2.30.29.30">
    <property type="entry name" value="Pleckstrin-homology domain (PH domain)/Phosphotyrosine-binding domain (PTB)"/>
    <property type="match status" value="1"/>
</dbReference>
<dbReference type="InterPro" id="IPR045188">
    <property type="entry name" value="Boi1/Boi2-like"/>
</dbReference>
<dbReference type="InterPro" id="IPR011993">
    <property type="entry name" value="PH-like_dom_sf"/>
</dbReference>
<dbReference type="InterPro" id="IPR001849">
    <property type="entry name" value="PH_domain"/>
</dbReference>
<dbReference type="PANTHER" id="PTHR22902">
    <property type="entry name" value="SESQUIPEDALIAN"/>
    <property type="match status" value="1"/>
</dbReference>
<dbReference type="PANTHER" id="PTHR22902:SF15">
    <property type="entry name" value="SESQUIPEDALIAN-2"/>
    <property type="match status" value="1"/>
</dbReference>
<dbReference type="Pfam" id="PF00169">
    <property type="entry name" value="PH"/>
    <property type="match status" value="1"/>
</dbReference>
<dbReference type="SMART" id="SM00233">
    <property type="entry name" value="PH"/>
    <property type="match status" value="1"/>
</dbReference>
<dbReference type="SUPFAM" id="SSF50729">
    <property type="entry name" value="PH domain-like"/>
    <property type="match status" value="1"/>
</dbReference>
<dbReference type="PROSITE" id="PS50003">
    <property type="entry name" value="PH_DOMAIN"/>
    <property type="match status" value="1"/>
</dbReference>
<gene>
    <name evidence="9" type="primary">PHETA2</name>
    <name evidence="9" type="synonym">FAM109B</name>
</gene>
<evidence type="ECO:0000250" key="1">
    <source>
        <dbReference type="UniProtKB" id="Q8N4B1"/>
    </source>
</evidence>
<evidence type="ECO:0000255" key="2"/>
<evidence type="ECO:0000255" key="3">
    <source>
        <dbReference type="PROSITE-ProRule" id="PRU00145"/>
    </source>
</evidence>
<evidence type="ECO:0000269" key="4">
    <source>
    </source>
</evidence>
<evidence type="ECO:0000269" key="5">
    <source>
    </source>
</evidence>
<evidence type="ECO:0000269" key="6">
    <source>
    </source>
</evidence>
<evidence type="ECO:0000305" key="7"/>
<evidence type="ECO:0000305" key="8">
    <source>
    </source>
</evidence>
<evidence type="ECO:0000312" key="9">
    <source>
        <dbReference type="HGNC" id="HGNC:27161"/>
    </source>
</evidence>
<proteinExistence type="evidence at protein level"/>
<feature type="chain" id="PRO_0000254133" description="Sesquipedalian-2">
    <location>
        <begin position="1"/>
        <end position="259"/>
    </location>
</feature>
<feature type="domain" description="PH" evidence="3">
    <location>
        <begin position="17"/>
        <end position="121"/>
    </location>
</feature>
<feature type="coiled-coil region" evidence="2">
    <location>
        <begin position="124"/>
        <end position="149"/>
    </location>
</feature>
<feature type="short sequence motif" description="F&amp;H">
    <location>
        <begin position="223"/>
        <end position="235"/>
    </location>
</feature>
<feature type="sequence variant" id="VAR_028822" description="In dbSNP:rs1807493." evidence="4">
    <original>A</original>
    <variation>G</variation>
    <location>
        <position position="188"/>
    </location>
</feature>
<feature type="mutagenesis site" description="Loss of OCRL-binding." evidence="6">
    <original>F</original>
    <variation>A</variation>
    <location>
        <position position="224"/>
    </location>
</feature>
<feature type="mutagenesis site" description="Loss of OCRL-binding." evidence="6">
    <original>H</original>
    <variation>A</variation>
    <location>
        <position position="228"/>
    </location>
</feature>
<feature type="mutagenesis site" description="Loss of OCRL-binding." evidence="6">
    <original>EI</original>
    <variation>AA</variation>
    <location>
        <begin position="234"/>
        <end position="235"/>
    </location>
</feature>
<sequence>MKLNERSVAHYALSDSPADHMGFLRTWGGPGTPPTPSGTGRRCWFVLKGNLLFSFESREGRAPLSLVVLEGCTVELAEAPVPEEFAFAICFDAPGVRPHLLAAEGPAAQEAWVKVLSRASFGYMRLVVRELESQLQDARQSLALQRRSSWKSVASRCKPQAPNHRAAGLENGHCLSKDSSPVGLVEEAGSRSAGWGLAEWELQGPASLLLGKGQSPVSPETSCFSTLHDWYGQEIVELRQCWQKRAQGSHSKCEEQDRP</sequence>
<organism>
    <name type="scientific">Homo sapiens</name>
    <name type="common">Human</name>
    <dbReference type="NCBI Taxonomy" id="9606"/>
    <lineage>
        <taxon>Eukaryota</taxon>
        <taxon>Metazoa</taxon>
        <taxon>Chordata</taxon>
        <taxon>Craniata</taxon>
        <taxon>Vertebrata</taxon>
        <taxon>Euteleostomi</taxon>
        <taxon>Mammalia</taxon>
        <taxon>Eutheria</taxon>
        <taxon>Euarchontoglires</taxon>
        <taxon>Primates</taxon>
        <taxon>Haplorrhini</taxon>
        <taxon>Catarrhini</taxon>
        <taxon>Hominidae</taxon>
        <taxon>Homo</taxon>
    </lineage>
</organism>
<name>SESQ2_HUMAN</name>
<accession>Q6ICB4</accession>
<accession>Q3SXQ3</accession>
<accession>Q8N6L9</accession>
<comment type="function">
    <text evidence="6">Plays a role in endocytic trafficking. Required for receptor recycling from endosomes, both to the trans-Golgi network and the plasma membrane.</text>
</comment>
<comment type="subunit">
    <text evidence="5 6">Forms homodimers and heterodimers with PHETA1. Interacts with OCRL and INPP5B.</text>
</comment>
<comment type="interaction">
    <interactant intactId="EBI-11081747">
        <id>Q6ICB4</id>
    </interactant>
    <interactant intactId="EBI-12357161">
        <id>Q5SYC1</id>
        <label>CLVS2</label>
    </interactant>
    <organismsDiffer>false</organismsDiffer>
    <experiments>3</experiments>
</comment>
<comment type="interaction">
    <interactant intactId="EBI-11081747">
        <id>Q6ICB4</id>
    </interactant>
    <interactant intactId="EBI-11749425">
        <id>Q01968-2</id>
        <label>OCRL</label>
    </interactant>
    <organismsDiffer>false</organismsDiffer>
    <experiments>6</experiments>
</comment>
<comment type="interaction">
    <interactant intactId="EBI-11081747">
        <id>Q6ICB4</id>
    </interactant>
    <interactant intactId="EBI-14131832">
        <id>Q8N4B1-4</id>
        <label>PHETA1</label>
    </interactant>
    <organismsDiffer>false</organismsDiffer>
    <experiments>5</experiments>
</comment>
<comment type="interaction">
    <interactant intactId="EBI-11081747">
        <id>Q6ICB4</id>
    </interactant>
    <interactant intactId="EBI-1057560">
        <id>Q9NW61</id>
        <label>PLEKHJ1</label>
    </interactant>
    <organismsDiffer>false</organismsDiffer>
    <experiments>6</experiments>
</comment>
<comment type="subcellular location">
    <subcellularLocation>
        <location evidence="6">Early endosome</location>
    </subcellularLocation>
    <subcellularLocation>
        <location evidence="6">Recycling endosome</location>
    </subcellularLocation>
    <subcellularLocation>
        <location evidence="6">Golgi apparatus</location>
        <location evidence="6">trans-Golgi network</location>
    </subcellularLocation>
    <subcellularLocation>
        <location evidence="6">Cytoplasmic vesicle</location>
        <location evidence="6">Clathrin-coated vesicle</location>
    </subcellularLocation>
    <text evidence="5 6">Also found on macropinosomes. Not detected in late endosomes, nor in lysosomes.</text>
</comment>
<comment type="domain">
    <text evidence="1">The F&amp;H motif, an approximately 12-13 amino-acid sequence centered around Phe and His residues, is essential for binding to OCRL and INPP5B.</text>
</comment>
<comment type="miscellaneous">
    <text evidence="8">Was named after 'sesquipedalian', an unnecessarily long description of a simple thing.</text>
</comment>
<comment type="similarity">
    <text evidence="7">Belongs to the sesquipedalian family.</text>
</comment>
<protein>
    <recommendedName>
        <fullName evidence="8">Sesquipedalian-2</fullName>
        <shortName evidence="8">Ses2</shortName>
    </recommendedName>
    <alternativeName>
        <fullName>27 kDa inositol polyphosphate phosphatase interacting protein B</fullName>
        <shortName>IPIP27B</shortName>
    </alternativeName>
    <alternativeName>
        <fullName evidence="7">PH domain-containing endocytic trafficking adaptor 2</fullName>
    </alternativeName>
</protein>
<reference key="1">
    <citation type="journal article" date="2004" name="Genome Biol.">
        <title>A genome annotation-driven approach to cloning the human ORFeome.</title>
        <authorList>
            <person name="Collins J.E."/>
            <person name="Wright C.L."/>
            <person name="Edwards C.A."/>
            <person name="Davis M.P."/>
            <person name="Grinham J.A."/>
            <person name="Cole C.G."/>
            <person name="Goward M.E."/>
            <person name="Aguado B."/>
            <person name="Mallya M."/>
            <person name="Mokrab Y."/>
            <person name="Huckle E.J."/>
            <person name="Beare D.M."/>
            <person name="Dunham I."/>
        </authorList>
    </citation>
    <scope>NUCLEOTIDE SEQUENCE [LARGE SCALE MRNA]</scope>
</reference>
<reference key="2">
    <citation type="journal article" date="1999" name="Nature">
        <title>The DNA sequence of human chromosome 22.</title>
        <authorList>
            <person name="Dunham I."/>
            <person name="Hunt A.R."/>
            <person name="Collins J.E."/>
            <person name="Bruskiewich R."/>
            <person name="Beare D.M."/>
            <person name="Clamp M."/>
            <person name="Smink L.J."/>
            <person name="Ainscough R."/>
            <person name="Almeida J.P."/>
            <person name="Babbage A.K."/>
            <person name="Bagguley C."/>
            <person name="Bailey J."/>
            <person name="Barlow K.F."/>
            <person name="Bates K.N."/>
            <person name="Beasley O.P."/>
            <person name="Bird C.P."/>
            <person name="Blakey S.E."/>
            <person name="Bridgeman A.M."/>
            <person name="Buck D."/>
            <person name="Burgess J."/>
            <person name="Burrill W.D."/>
            <person name="Burton J."/>
            <person name="Carder C."/>
            <person name="Carter N.P."/>
            <person name="Chen Y."/>
            <person name="Clark G."/>
            <person name="Clegg S.M."/>
            <person name="Cobley V.E."/>
            <person name="Cole C.G."/>
            <person name="Collier R.E."/>
            <person name="Connor R."/>
            <person name="Conroy D."/>
            <person name="Corby N.R."/>
            <person name="Coville G.J."/>
            <person name="Cox A.V."/>
            <person name="Davis J."/>
            <person name="Dawson E."/>
            <person name="Dhami P.D."/>
            <person name="Dockree C."/>
            <person name="Dodsworth S.J."/>
            <person name="Durbin R.M."/>
            <person name="Ellington A.G."/>
            <person name="Evans K.L."/>
            <person name="Fey J.M."/>
            <person name="Fleming K."/>
            <person name="French L."/>
            <person name="Garner A.A."/>
            <person name="Gilbert J.G.R."/>
            <person name="Goward M.E."/>
            <person name="Grafham D.V."/>
            <person name="Griffiths M.N.D."/>
            <person name="Hall C."/>
            <person name="Hall R.E."/>
            <person name="Hall-Tamlyn G."/>
            <person name="Heathcott R.W."/>
            <person name="Ho S."/>
            <person name="Holmes S."/>
            <person name="Hunt S.E."/>
            <person name="Jones M.C."/>
            <person name="Kershaw J."/>
            <person name="Kimberley A.M."/>
            <person name="King A."/>
            <person name="Laird G.K."/>
            <person name="Langford C.F."/>
            <person name="Leversha M.A."/>
            <person name="Lloyd C."/>
            <person name="Lloyd D.M."/>
            <person name="Martyn I.D."/>
            <person name="Mashreghi-Mohammadi M."/>
            <person name="Matthews L.H."/>
            <person name="Mccann O.T."/>
            <person name="Mcclay J."/>
            <person name="Mclaren S."/>
            <person name="McMurray A.A."/>
            <person name="Milne S.A."/>
            <person name="Mortimore B.J."/>
            <person name="Odell C.N."/>
            <person name="Pavitt R."/>
            <person name="Pearce A.V."/>
            <person name="Pearson D."/>
            <person name="Phillimore B.J.C.T."/>
            <person name="Phillips S.H."/>
            <person name="Plumb R.W."/>
            <person name="Ramsay H."/>
            <person name="Ramsey Y."/>
            <person name="Rogers L."/>
            <person name="Ross M.T."/>
            <person name="Scott C.E."/>
            <person name="Sehra H.K."/>
            <person name="Skuce C.D."/>
            <person name="Smalley S."/>
            <person name="Smith M.L."/>
            <person name="Soderlund C."/>
            <person name="Spragon L."/>
            <person name="Steward C.A."/>
            <person name="Sulston J.E."/>
            <person name="Swann R.M."/>
            <person name="Vaudin M."/>
            <person name="Wall M."/>
            <person name="Wallis J.M."/>
            <person name="Whiteley M.N."/>
            <person name="Willey D.L."/>
            <person name="Williams L."/>
            <person name="Williams S.A."/>
            <person name="Williamson H."/>
            <person name="Wilmer T.E."/>
            <person name="Wilming L."/>
            <person name="Wright C.L."/>
            <person name="Hubbard T."/>
            <person name="Bentley D.R."/>
            <person name="Beck S."/>
            <person name="Rogers J."/>
            <person name="Shimizu N."/>
            <person name="Minoshima S."/>
            <person name="Kawasaki K."/>
            <person name="Sasaki T."/>
            <person name="Asakawa S."/>
            <person name="Kudoh J."/>
            <person name="Shintani A."/>
            <person name="Shibuya K."/>
            <person name="Yoshizaki Y."/>
            <person name="Aoki N."/>
            <person name="Mitsuyama S."/>
            <person name="Roe B.A."/>
            <person name="Chen F."/>
            <person name="Chu L."/>
            <person name="Crabtree J."/>
            <person name="Deschamps S."/>
            <person name="Do A."/>
            <person name="Do T."/>
            <person name="Dorman A."/>
            <person name="Fang F."/>
            <person name="Fu Y."/>
            <person name="Hu P."/>
            <person name="Hua A."/>
            <person name="Kenton S."/>
            <person name="Lai H."/>
            <person name="Lao H.I."/>
            <person name="Lewis J."/>
            <person name="Lewis S."/>
            <person name="Lin S.-P."/>
            <person name="Loh P."/>
            <person name="Malaj E."/>
            <person name="Nguyen T."/>
            <person name="Pan H."/>
            <person name="Phan S."/>
            <person name="Qi S."/>
            <person name="Qian Y."/>
            <person name="Ray L."/>
            <person name="Ren Q."/>
            <person name="Shaull S."/>
            <person name="Sloan D."/>
            <person name="Song L."/>
            <person name="Wang Q."/>
            <person name="Wang Y."/>
            <person name="Wang Z."/>
            <person name="White J."/>
            <person name="Willingham D."/>
            <person name="Wu H."/>
            <person name="Yao Z."/>
            <person name="Zhan M."/>
            <person name="Zhang G."/>
            <person name="Chissoe S."/>
            <person name="Murray J."/>
            <person name="Miller N."/>
            <person name="Minx P."/>
            <person name="Fulton R."/>
            <person name="Johnson D."/>
            <person name="Bemis G."/>
            <person name="Bentley D."/>
            <person name="Bradshaw H."/>
            <person name="Bourne S."/>
            <person name="Cordes M."/>
            <person name="Du Z."/>
            <person name="Fulton L."/>
            <person name="Goela D."/>
            <person name="Graves T."/>
            <person name="Hawkins J."/>
            <person name="Hinds K."/>
            <person name="Kemp K."/>
            <person name="Latreille P."/>
            <person name="Layman D."/>
            <person name="Ozersky P."/>
            <person name="Rohlfing T."/>
            <person name="Scheet P."/>
            <person name="Walker C."/>
            <person name="Wamsley A."/>
            <person name="Wohldmann P."/>
            <person name="Pepin K."/>
            <person name="Nelson J."/>
            <person name="Korf I."/>
            <person name="Bedell J.A."/>
            <person name="Hillier L.W."/>
            <person name="Mardis E."/>
            <person name="Waterston R."/>
            <person name="Wilson R."/>
            <person name="Emanuel B.S."/>
            <person name="Shaikh T."/>
            <person name="Kurahashi H."/>
            <person name="Saitta S."/>
            <person name="Budarf M.L."/>
            <person name="McDermid H.E."/>
            <person name="Johnson A."/>
            <person name="Wong A.C.C."/>
            <person name="Morrow B.E."/>
            <person name="Edelmann L."/>
            <person name="Kim U.J."/>
            <person name="Shizuya H."/>
            <person name="Simon M.I."/>
            <person name="Dumanski J.P."/>
            <person name="Peyrard M."/>
            <person name="Kedra D."/>
            <person name="Seroussi E."/>
            <person name="Fransson I."/>
            <person name="Tapia I."/>
            <person name="Bruder C.E."/>
            <person name="O'Brien K.P."/>
            <person name="Wilkinson P."/>
            <person name="Bodenteich A."/>
            <person name="Hartman K."/>
            <person name="Hu X."/>
            <person name="Khan A.S."/>
            <person name="Lane L."/>
            <person name="Tilahun Y."/>
            <person name="Wright H."/>
        </authorList>
    </citation>
    <scope>NUCLEOTIDE SEQUENCE [LARGE SCALE GENOMIC DNA]</scope>
</reference>
<reference key="3">
    <citation type="journal article" date="2004" name="Genome Res.">
        <title>The status, quality, and expansion of the NIH full-length cDNA project: the Mammalian Gene Collection (MGC).</title>
        <authorList>
            <consortium name="The MGC Project Team"/>
        </authorList>
    </citation>
    <scope>NUCLEOTIDE SEQUENCE [LARGE SCALE MRNA]</scope>
    <scope>VARIANT GLY-188</scope>
    <source>
        <tissue>Colon</tissue>
    </source>
</reference>
<reference key="4">
    <citation type="journal article" date="2010" name="Proc. Natl. Acad. Sci. U.S.A.">
        <title>Two closely related endocytic proteins that share a common OCRL-binding motif with APPL1.</title>
        <authorList>
            <person name="Swan L.E."/>
            <person name="Tomasini L."/>
            <person name="Pirruccello M."/>
            <person name="Lunardi J."/>
            <person name="De Camilli P."/>
        </authorList>
    </citation>
    <scope>INTERACTION WITH OCRL</scope>
    <scope>F&amp;H MOTIF</scope>
    <scope>SUBCELLULAR LOCATION</scope>
</reference>
<reference key="5">
    <citation type="journal article" date="2011" name="Mol. Biol. Cell">
        <title>The PH domain proteins IPIP27A and B link OCRL1 to receptor recycling in the endocytic pathway.</title>
        <authorList>
            <person name="Noakes C.J."/>
            <person name="Lee G."/>
            <person name="Lowe M."/>
        </authorList>
    </citation>
    <scope>FUNCTION</scope>
    <scope>INTERACTION WITH OCRL AND INPP5B</scope>
    <scope>SUBUNIT</scope>
    <scope>SUBCELLULAR LOCATION</scope>
    <scope>MUTAGENESIS OF PHE-224; HIS-228 AND 234-GLU-ILE-235</scope>
</reference>